<organism>
    <name type="scientific">Saccharolobus islandicus (strain Y.N.15.51 / Yellowstone #2)</name>
    <name type="common">Sulfolobus islandicus</name>
    <dbReference type="NCBI Taxonomy" id="419942"/>
    <lineage>
        <taxon>Archaea</taxon>
        <taxon>Thermoproteota</taxon>
        <taxon>Thermoprotei</taxon>
        <taxon>Sulfolobales</taxon>
        <taxon>Sulfolobaceae</taxon>
        <taxon>Saccharolobus</taxon>
    </lineage>
</organism>
<evidence type="ECO:0000255" key="1">
    <source>
        <dbReference type="HAMAP-Rule" id="MF_01117"/>
    </source>
</evidence>
<protein>
    <recommendedName>
        <fullName evidence="1">CDP-archaeol synthase</fullName>
        <ecNumber evidence="1">2.7.7.67</ecNumber>
    </recommendedName>
    <alternativeName>
        <fullName evidence="1">CDP-2,3-bis-(O-geranylgeranyl)-sn-glycerol synthase</fullName>
    </alternativeName>
</protein>
<reference key="1">
    <citation type="journal article" date="2009" name="Proc. Natl. Acad. Sci. U.S.A.">
        <title>Biogeography of the Sulfolobus islandicus pan-genome.</title>
        <authorList>
            <person name="Reno M.L."/>
            <person name="Held N.L."/>
            <person name="Fields C.J."/>
            <person name="Burke P.V."/>
            <person name="Whitaker R.J."/>
        </authorList>
    </citation>
    <scope>NUCLEOTIDE SEQUENCE [LARGE SCALE GENOMIC DNA]</scope>
    <source>
        <strain>Y.N.15.51 / Yellowstone #2</strain>
    </source>
</reference>
<accession>C3NHG3</accession>
<feature type="chain" id="PRO_1000213609" description="CDP-archaeol synthase">
    <location>
        <begin position="1"/>
        <end position="166"/>
    </location>
</feature>
<feature type="transmembrane region" description="Helical" evidence="1">
    <location>
        <begin position="7"/>
        <end position="27"/>
    </location>
</feature>
<feature type="transmembrane region" description="Helical" evidence="1">
    <location>
        <begin position="55"/>
        <end position="75"/>
    </location>
</feature>
<feature type="transmembrane region" description="Helical" evidence="1">
    <location>
        <begin position="78"/>
        <end position="98"/>
    </location>
</feature>
<feature type="transmembrane region" description="Helical" evidence="1">
    <location>
        <begin position="116"/>
        <end position="136"/>
    </location>
</feature>
<feature type="transmembrane region" description="Helical" evidence="1">
    <location>
        <begin position="138"/>
        <end position="158"/>
    </location>
</feature>
<gene>
    <name evidence="1" type="primary">carS</name>
    <name type="ordered locus">YN1551_1483</name>
</gene>
<sequence>MSIAYDLLLSILIYLPAFIANGSGPFIKRGTPIDFGKNFVDGRRLFGDGKTFEGLIVALTFGTTVGVIISKFFTAEWTLISFLESLFAMIGDMIGAFIKRRLGIPRGGRVLGLDQLDFVLGASLILVLMRVNITWYQFLFICGLAFFLHQGTNYVAYLLKIKNVPW</sequence>
<proteinExistence type="inferred from homology"/>
<name>CDPAS_SACI1</name>
<dbReference type="EC" id="2.7.7.67" evidence="1"/>
<dbReference type="EMBL" id="CP001404">
    <property type="protein sequence ID" value="ACP48573.1"/>
    <property type="molecule type" value="Genomic_DNA"/>
</dbReference>
<dbReference type="RefSeq" id="WP_012717458.1">
    <property type="nucleotide sequence ID" value="NC_012623.1"/>
</dbReference>
<dbReference type="SMR" id="C3NHG3"/>
<dbReference type="GeneID" id="7811863"/>
<dbReference type="KEGG" id="sin:YN1551_1483"/>
<dbReference type="HOGENOM" id="CLU_105710_0_0_2"/>
<dbReference type="UniPathway" id="UPA00940"/>
<dbReference type="Proteomes" id="UP000006818">
    <property type="component" value="Chromosome"/>
</dbReference>
<dbReference type="GO" id="GO:0005886">
    <property type="term" value="C:plasma membrane"/>
    <property type="evidence" value="ECO:0007669"/>
    <property type="project" value="UniProtKB-SubCell"/>
</dbReference>
<dbReference type="GO" id="GO:0043338">
    <property type="term" value="F:CDP-2,3-bis-(O-geranylgeranyl)-sn-glycerol synthase activity"/>
    <property type="evidence" value="ECO:0007669"/>
    <property type="project" value="UniProtKB-EC"/>
</dbReference>
<dbReference type="GO" id="GO:0046474">
    <property type="term" value="P:glycerophospholipid biosynthetic process"/>
    <property type="evidence" value="ECO:0007669"/>
    <property type="project" value="UniProtKB-UniRule"/>
</dbReference>
<dbReference type="HAMAP" id="MF_01117">
    <property type="entry name" value="CDP_archaeol_synth"/>
    <property type="match status" value="1"/>
</dbReference>
<dbReference type="InterPro" id="IPR032690">
    <property type="entry name" value="CarS"/>
</dbReference>
<dbReference type="InterPro" id="IPR002726">
    <property type="entry name" value="CarS_archaea"/>
</dbReference>
<dbReference type="NCBIfam" id="NF003114">
    <property type="entry name" value="PRK04032.1"/>
    <property type="match status" value="1"/>
</dbReference>
<dbReference type="PANTHER" id="PTHR39650">
    <property type="entry name" value="CDP-ARCHAEOL SYNTHASE"/>
    <property type="match status" value="1"/>
</dbReference>
<dbReference type="PANTHER" id="PTHR39650:SF1">
    <property type="entry name" value="CDP-ARCHAEOL SYNTHASE"/>
    <property type="match status" value="1"/>
</dbReference>
<dbReference type="Pfam" id="PF01864">
    <property type="entry name" value="CarS-like"/>
    <property type="match status" value="1"/>
</dbReference>
<comment type="function">
    <text evidence="1">Catalyzes the formation of CDP-2,3-bis-(O-geranylgeranyl)-sn-glycerol (CDP-archaeol) from 2,3-bis-(O-geranylgeranyl)-sn-glycerol 1-phosphate (DGGGP) and CTP. This reaction is the third ether-bond-formation step in the biosynthesis of archaeal membrane lipids.</text>
</comment>
<comment type="catalytic activity">
    <reaction evidence="1">
        <text>2,3-bis-O-(geranylgeranyl)-sn-glycerol 1-phosphate + CTP + H(+) = CDP-2,3-bis-O-(geranylgeranyl)-sn-glycerol + diphosphate</text>
        <dbReference type="Rhea" id="RHEA:25690"/>
        <dbReference type="ChEBI" id="CHEBI:15378"/>
        <dbReference type="ChEBI" id="CHEBI:33019"/>
        <dbReference type="ChEBI" id="CHEBI:37563"/>
        <dbReference type="ChEBI" id="CHEBI:58837"/>
        <dbReference type="ChEBI" id="CHEBI:58838"/>
        <dbReference type="EC" id="2.7.7.67"/>
    </reaction>
</comment>
<comment type="cofactor">
    <cofactor evidence="1">
        <name>Mg(2+)</name>
        <dbReference type="ChEBI" id="CHEBI:18420"/>
    </cofactor>
</comment>
<comment type="pathway">
    <text evidence="1">Membrane lipid metabolism; glycerophospholipid metabolism.</text>
</comment>
<comment type="subcellular location">
    <subcellularLocation>
        <location evidence="1">Cell membrane</location>
        <topology evidence="1">Multi-pass membrane protein</topology>
    </subcellularLocation>
</comment>
<comment type="similarity">
    <text evidence="1">Belongs to the CDP-archaeol synthase family.</text>
</comment>
<keyword id="KW-1003">Cell membrane</keyword>
<keyword id="KW-0444">Lipid biosynthesis</keyword>
<keyword id="KW-0443">Lipid metabolism</keyword>
<keyword id="KW-0460">Magnesium</keyword>
<keyword id="KW-0472">Membrane</keyword>
<keyword id="KW-0594">Phospholipid biosynthesis</keyword>
<keyword id="KW-1208">Phospholipid metabolism</keyword>
<keyword id="KW-0808">Transferase</keyword>
<keyword id="KW-0812">Transmembrane</keyword>
<keyword id="KW-1133">Transmembrane helix</keyword>